<gene>
    <name evidence="1" type="primary">rnfH</name>
    <name type="ordered locus">amb2619</name>
</gene>
<accession>Q2W402</accession>
<reference key="1">
    <citation type="journal article" date="2005" name="DNA Res.">
        <title>Complete genome sequence of the facultative anaerobic magnetotactic bacterium Magnetospirillum sp. strain AMB-1.</title>
        <authorList>
            <person name="Matsunaga T."/>
            <person name="Okamura Y."/>
            <person name="Fukuda Y."/>
            <person name="Wahyudi A.T."/>
            <person name="Murase Y."/>
            <person name="Takeyama H."/>
        </authorList>
    </citation>
    <scope>NUCLEOTIDE SEQUENCE [LARGE SCALE GENOMIC DNA]</scope>
    <source>
        <strain>ATCC 700264 / AMB-1</strain>
    </source>
</reference>
<dbReference type="EMBL" id="AP007255">
    <property type="protein sequence ID" value="BAE51423.1"/>
    <property type="molecule type" value="Genomic_DNA"/>
</dbReference>
<dbReference type="RefSeq" id="WP_011385000.1">
    <property type="nucleotide sequence ID" value="NC_007626.1"/>
</dbReference>
<dbReference type="SMR" id="Q2W402"/>
<dbReference type="STRING" id="342108.amb2619"/>
<dbReference type="KEGG" id="mag:amb2619"/>
<dbReference type="HOGENOM" id="CLU_150721_1_0_5"/>
<dbReference type="OrthoDB" id="9796575at2"/>
<dbReference type="Proteomes" id="UP000007058">
    <property type="component" value="Chromosome"/>
</dbReference>
<dbReference type="Gene3D" id="3.10.20.280">
    <property type="entry name" value="RnfH-like"/>
    <property type="match status" value="1"/>
</dbReference>
<dbReference type="HAMAP" id="MF_00460">
    <property type="entry name" value="UPF0125_RnfH"/>
    <property type="match status" value="1"/>
</dbReference>
<dbReference type="InterPro" id="IPR016155">
    <property type="entry name" value="Mopterin_synth/thiamin_S_b"/>
</dbReference>
<dbReference type="InterPro" id="IPR005346">
    <property type="entry name" value="RnfH"/>
</dbReference>
<dbReference type="InterPro" id="IPR037021">
    <property type="entry name" value="RnfH_sf"/>
</dbReference>
<dbReference type="NCBIfam" id="NF002490">
    <property type="entry name" value="PRK01777.1"/>
    <property type="match status" value="1"/>
</dbReference>
<dbReference type="PANTHER" id="PTHR37483">
    <property type="entry name" value="UPF0125 PROTEIN RATB"/>
    <property type="match status" value="1"/>
</dbReference>
<dbReference type="PANTHER" id="PTHR37483:SF1">
    <property type="entry name" value="UPF0125 PROTEIN RATB"/>
    <property type="match status" value="1"/>
</dbReference>
<dbReference type="Pfam" id="PF03658">
    <property type="entry name" value="Ub-RnfH"/>
    <property type="match status" value="1"/>
</dbReference>
<dbReference type="SUPFAM" id="SSF54285">
    <property type="entry name" value="MoaD/ThiS"/>
    <property type="match status" value="1"/>
</dbReference>
<protein>
    <recommendedName>
        <fullName evidence="1">Protein RnfH</fullName>
    </recommendedName>
</protein>
<organism>
    <name type="scientific">Paramagnetospirillum magneticum (strain ATCC 700264 / AMB-1)</name>
    <name type="common">Magnetospirillum magneticum</name>
    <dbReference type="NCBI Taxonomy" id="342108"/>
    <lineage>
        <taxon>Bacteria</taxon>
        <taxon>Pseudomonadati</taxon>
        <taxon>Pseudomonadota</taxon>
        <taxon>Alphaproteobacteria</taxon>
        <taxon>Rhodospirillales</taxon>
        <taxon>Magnetospirillaceae</taxon>
        <taxon>Paramagnetospirillum</taxon>
    </lineage>
</organism>
<proteinExistence type="inferred from homology"/>
<comment type="similarity">
    <text evidence="1">Belongs to the UPF0125 (RnfH) family.</text>
</comment>
<name>RNFH_PARM1</name>
<feature type="chain" id="PRO_1000013579" description="Protein RnfH">
    <location>
        <begin position="1"/>
        <end position="97"/>
    </location>
</feature>
<sequence>MKIGVVYALPSRQSWLSIDVPEGTTVKEAIQKSGILNQFPEIDLETQKVGIFGKAAALDAVVEEGARIEIYRPITVDPKTVKRRAAPEAPAAGGTES</sequence>
<evidence type="ECO:0000255" key="1">
    <source>
        <dbReference type="HAMAP-Rule" id="MF_00460"/>
    </source>
</evidence>